<sequence>DIQMTQSTSSLSASLGDRVTISCRASQDISNYLNWYQQKPDGTVKLLIYYTSRLHSGVPSRFSGSGSGTDYSLTISNLEQEDIATYFCQQGYMLPRTFGGGTKLEIKR</sequence>
<proteinExistence type="evidence at protein level"/>
<protein>
    <recommendedName>
        <fullName>Ig kappa chain V-V region HP 123E6</fullName>
    </recommendedName>
</protein>
<comment type="miscellaneous">
    <text>Anti-arsonate hybridoma protein.</text>
</comment>
<dbReference type="PIR" id="A28044">
    <property type="entry name" value="A28044"/>
</dbReference>
<dbReference type="PIR" id="B28044">
    <property type="entry name" value="B28044"/>
</dbReference>
<dbReference type="PIR" id="C26405">
    <property type="entry name" value="C26405"/>
</dbReference>
<dbReference type="PIR" id="D48677">
    <property type="entry name" value="D48677"/>
</dbReference>
<dbReference type="PDB" id="1DVF">
    <property type="method" value="X-ray"/>
    <property type="resolution" value="1.90 A"/>
    <property type="chains" value="C=1-107"/>
</dbReference>
<dbReference type="PDBsum" id="1DVF"/>
<dbReference type="SMR" id="P01646"/>
<dbReference type="FunCoup" id="P01646">
    <property type="interactions" value="664"/>
</dbReference>
<dbReference type="InParanoid" id="P01646"/>
<dbReference type="EvolutionaryTrace" id="P01646"/>
<dbReference type="Proteomes" id="UP000000589">
    <property type="component" value="Unplaced"/>
</dbReference>
<dbReference type="RNAct" id="P01646">
    <property type="molecule type" value="protein"/>
</dbReference>
<dbReference type="GO" id="GO:0019814">
    <property type="term" value="C:immunoglobulin complex"/>
    <property type="evidence" value="ECO:0000318"/>
    <property type="project" value="GO_Central"/>
</dbReference>
<dbReference type="GO" id="GO:0002250">
    <property type="term" value="P:adaptive immune response"/>
    <property type="evidence" value="ECO:0007669"/>
    <property type="project" value="UniProtKB-KW"/>
</dbReference>
<dbReference type="GO" id="GO:0006955">
    <property type="term" value="P:immune response"/>
    <property type="evidence" value="ECO:0000318"/>
    <property type="project" value="GO_Central"/>
</dbReference>
<dbReference type="CDD" id="cd04980">
    <property type="entry name" value="IgV_L_kappa"/>
    <property type="match status" value="1"/>
</dbReference>
<dbReference type="FunFam" id="2.60.40.10:FF:000212">
    <property type="entry name" value="Immunoglobulin kappa chain variable 12-38"/>
    <property type="match status" value="1"/>
</dbReference>
<dbReference type="Gene3D" id="2.60.40.10">
    <property type="entry name" value="Immunoglobulins"/>
    <property type="match status" value="1"/>
</dbReference>
<dbReference type="InterPro" id="IPR007110">
    <property type="entry name" value="Ig-like_dom"/>
</dbReference>
<dbReference type="InterPro" id="IPR036179">
    <property type="entry name" value="Ig-like_dom_sf"/>
</dbReference>
<dbReference type="InterPro" id="IPR013783">
    <property type="entry name" value="Ig-like_fold"/>
</dbReference>
<dbReference type="InterPro" id="IPR003599">
    <property type="entry name" value="Ig_sub"/>
</dbReference>
<dbReference type="InterPro" id="IPR013106">
    <property type="entry name" value="Ig_V-set"/>
</dbReference>
<dbReference type="InterPro" id="IPR050150">
    <property type="entry name" value="IgV_Light_Chain"/>
</dbReference>
<dbReference type="PANTHER" id="PTHR23267">
    <property type="entry name" value="IMMUNOGLOBULIN LIGHT CHAIN"/>
    <property type="match status" value="1"/>
</dbReference>
<dbReference type="Pfam" id="PF07686">
    <property type="entry name" value="V-set"/>
    <property type="match status" value="1"/>
</dbReference>
<dbReference type="SMART" id="SM00409">
    <property type="entry name" value="IG"/>
    <property type="match status" value="1"/>
</dbReference>
<dbReference type="SMART" id="SM00406">
    <property type="entry name" value="IGv"/>
    <property type="match status" value="1"/>
</dbReference>
<dbReference type="SUPFAM" id="SSF48726">
    <property type="entry name" value="Immunoglobulin"/>
    <property type="match status" value="1"/>
</dbReference>
<dbReference type="PROSITE" id="PS50835">
    <property type="entry name" value="IG_LIKE"/>
    <property type="match status" value="1"/>
</dbReference>
<organism>
    <name type="scientific">Mus musculus</name>
    <name type="common">Mouse</name>
    <dbReference type="NCBI Taxonomy" id="10090"/>
    <lineage>
        <taxon>Eukaryota</taxon>
        <taxon>Metazoa</taxon>
        <taxon>Chordata</taxon>
        <taxon>Craniata</taxon>
        <taxon>Vertebrata</taxon>
        <taxon>Euteleostomi</taxon>
        <taxon>Mammalia</taxon>
        <taxon>Eutheria</taxon>
        <taxon>Euarchontoglires</taxon>
        <taxon>Glires</taxon>
        <taxon>Rodentia</taxon>
        <taxon>Myomorpha</taxon>
        <taxon>Muroidea</taxon>
        <taxon>Muridae</taxon>
        <taxon>Murinae</taxon>
        <taxon>Mus</taxon>
        <taxon>Mus</taxon>
    </lineage>
</organism>
<evidence type="ECO:0000255" key="1">
    <source>
        <dbReference type="PROSITE-ProRule" id="PRU00114"/>
    </source>
</evidence>
<evidence type="ECO:0007829" key="2">
    <source>
        <dbReference type="PDB" id="1DVF"/>
    </source>
</evidence>
<name>KV5AD_MOUSE</name>
<reference key="1">
    <citation type="journal article" date="1981" name="Proc. Natl. Acad. Sci. U.S.A.">
        <title>Complete amino acid sequence of light chain variable regions derived from five monoclonal anti-p-azophenylarsonate antibodies differing with respect to a crossreactive idiotype.</title>
        <authorList>
            <person name="Siegelman M."/>
            <person name="Capra J.D."/>
        </authorList>
    </citation>
    <scope>PROTEIN SEQUENCE</scope>
    <source>
        <strain>A/J</strain>
    </source>
</reference>
<keyword id="KW-0002">3D-structure</keyword>
<keyword id="KW-1064">Adaptive immunity</keyword>
<keyword id="KW-0903">Direct protein sequencing</keyword>
<keyword id="KW-1015">Disulfide bond</keyword>
<keyword id="KW-0391">Immunity</keyword>
<keyword id="KW-1280">Immunoglobulin</keyword>
<keyword id="KW-1185">Reference proteome</keyword>
<accession>P01646</accession>
<feature type="chain" id="PRO_0000059801" description="Ig kappa chain V-V region HP 123E6">
    <location>
        <begin position="1"/>
        <end position="108" status="greater than"/>
    </location>
</feature>
<feature type="region of interest" description="Framework-1">
    <location>
        <begin position="1"/>
        <end position="23"/>
    </location>
</feature>
<feature type="region of interest" description="Complementarity-determining-1">
    <location>
        <begin position="24"/>
        <end position="34"/>
    </location>
</feature>
<feature type="region of interest" description="Framework-2">
    <location>
        <begin position="35"/>
        <end position="49"/>
    </location>
</feature>
<feature type="region of interest" description="Complementarity-determining-2">
    <location>
        <begin position="50"/>
        <end position="56"/>
    </location>
</feature>
<feature type="region of interest" description="Framework-3">
    <location>
        <begin position="57"/>
        <end position="88"/>
    </location>
</feature>
<feature type="region of interest" description="Complementarity-determining-3">
    <location>
        <begin position="89"/>
        <end position="97"/>
    </location>
</feature>
<feature type="region of interest" description="Framework-4">
    <location>
        <begin position="98"/>
        <end position="108"/>
    </location>
</feature>
<feature type="disulfide bond" evidence="1">
    <location>
        <begin position="23"/>
        <end position="88"/>
    </location>
</feature>
<feature type="non-terminal residue">
    <location>
        <position position="108"/>
    </location>
</feature>
<feature type="strand" evidence="2">
    <location>
        <begin position="4"/>
        <end position="7"/>
    </location>
</feature>
<feature type="strand" evidence="2">
    <location>
        <begin position="9"/>
        <end position="13"/>
    </location>
</feature>
<feature type="strand" evidence="2">
    <location>
        <begin position="19"/>
        <end position="27"/>
    </location>
</feature>
<feature type="strand" evidence="2">
    <location>
        <begin position="33"/>
        <end position="38"/>
    </location>
</feature>
<feature type="strand" evidence="2">
    <location>
        <begin position="44"/>
        <end position="49"/>
    </location>
</feature>
<feature type="turn" evidence="2">
    <location>
        <begin position="50"/>
        <end position="52"/>
    </location>
</feature>
<feature type="strand" evidence="2">
    <location>
        <begin position="62"/>
        <end position="67"/>
    </location>
</feature>
<feature type="strand" evidence="2">
    <location>
        <begin position="70"/>
        <end position="75"/>
    </location>
</feature>
<feature type="helix" evidence="2">
    <location>
        <begin position="80"/>
        <end position="82"/>
    </location>
</feature>
<feature type="strand" evidence="2">
    <location>
        <begin position="84"/>
        <end position="90"/>
    </location>
</feature>
<feature type="strand" evidence="2">
    <location>
        <begin position="92"/>
        <end position="95"/>
    </location>
</feature>
<feature type="strand" evidence="2">
    <location>
        <begin position="102"/>
        <end position="106"/>
    </location>
</feature>